<comment type="function">
    <text evidence="1">FMRFamides and FMRFamide-like peptides are neuropeptides.</text>
</comment>
<comment type="subcellular location">
    <subcellularLocation>
        <location evidence="6">Secreted</location>
    </subcellularLocation>
</comment>
<comment type="similarity">
    <text evidence="2">Belongs to the FARP (FMRF amide related peptide) family.</text>
</comment>
<protein>
    <recommendedName>
        <fullName evidence="4">Extended FMRFamide-12</fullName>
        <shortName evidence="4">FMRFa-12</shortName>
    </recommendedName>
</protein>
<keyword id="KW-0027">Amidation</keyword>
<keyword id="KW-0903">Direct protein sequencing</keyword>
<keyword id="KW-0527">Neuropeptide</keyword>
<keyword id="KW-0964">Secreted</keyword>
<feature type="peptide" id="PRO_0000421556" description="Extended FMRFamide-12" evidence="3">
    <location>
        <begin position="1"/>
        <end position="15"/>
    </location>
</feature>
<feature type="modified residue" description="Leucine amide" evidence="3">
    <location>
        <position position="15"/>
    </location>
</feature>
<feature type="unsure residue" description="L or I" evidence="3">
    <location>
        <position position="4"/>
    </location>
</feature>
<feature type="unsure residue" description="L or I" evidence="3">
    <location>
        <position position="13"/>
    </location>
</feature>
<feature type="unsure residue" description="L or I" evidence="3">
    <location>
        <position position="15"/>
    </location>
</feature>
<evidence type="ECO:0000250" key="1">
    <source>
        <dbReference type="UniProtKB" id="P34405"/>
    </source>
</evidence>
<evidence type="ECO:0000255" key="2"/>
<evidence type="ECO:0000269" key="3">
    <source>
    </source>
</evidence>
<evidence type="ECO:0000303" key="4">
    <source>
    </source>
</evidence>
<evidence type="ECO:0000305" key="5"/>
<evidence type="ECO:0000305" key="6">
    <source>
    </source>
</evidence>
<proteinExistence type="evidence at protein level"/>
<sequence length="15" mass="1756">SPALDDEHNDNFLRL</sequence>
<accession>B3A0C9</accession>
<reference evidence="5" key="1">
    <citation type="journal article" date="2012" name="Syst. Biol.">
        <title>Peptidomics-based phylogeny and biogeography of Mantophasmatodea (Hexapoda).</title>
        <authorList>
            <person name="Predel R."/>
            <person name="Neupert S."/>
            <person name="Huetteroth W."/>
            <person name="Kahnt J."/>
            <person name="Waidelich D."/>
            <person name="Roth S."/>
        </authorList>
    </citation>
    <scope>PROTEIN SEQUENCE</scope>
    <scope>AMIDATION AT LEU-15</scope>
    <source>
        <tissue evidence="3">Thoracic perisympathetic organs</tissue>
    </source>
</reference>
<dbReference type="GO" id="GO:0005576">
    <property type="term" value="C:extracellular region"/>
    <property type="evidence" value="ECO:0007669"/>
    <property type="project" value="UniProtKB-SubCell"/>
</dbReference>
<dbReference type="GO" id="GO:0007218">
    <property type="term" value="P:neuropeptide signaling pathway"/>
    <property type="evidence" value="ECO:0007669"/>
    <property type="project" value="UniProtKB-KW"/>
</dbReference>
<name>FAR12_HEMMO</name>
<organism>
    <name type="scientific">Hemilobophasma montaguense</name>
    <name type="common">Gladiator</name>
    <name type="synonym">Heel-walker</name>
    <dbReference type="NCBI Taxonomy" id="253130"/>
    <lineage>
        <taxon>Eukaryota</taxon>
        <taxon>Metazoa</taxon>
        <taxon>Ecdysozoa</taxon>
        <taxon>Arthropoda</taxon>
        <taxon>Hexapoda</taxon>
        <taxon>Insecta</taxon>
        <taxon>Pterygota</taxon>
        <taxon>Neoptera</taxon>
        <taxon>Polyneoptera</taxon>
        <taxon>Mantophasmatodea</taxon>
        <taxon>Austrophasmatidae</taxon>
        <taxon>Hemilobophasma</taxon>
    </lineage>
</organism>